<name>SELA_HELPJ</name>
<sequence>MANITTKETPPTTPDLLKSPYQKIINASVSVFDETHGRSFFSPQFYEKIEPYLKEVLTHPIGLECDLNTAKKTNRLTPLKQLFKVCFDTEEVLIVNNNTSTVFLIANALAQQKEIIVSYGELVGGDFNLKDILLSSGARLHLVGNTNRAYLRDYRLALNENSKMLFKTHNPTFKKDTSFKDLQALAKEHGLIDYYNLGDVDLLNRTALEEILALKPSLVSFSADKSFNSAQAGIIMGQKEWVETLKNHPLYRALRVGKITLTLLFHSLNAWVNHQEEITIHALLHQTKDALLQKALKLYALLKPLELNVSIASSFSKIGNLPDKELESFCVKVQPKNTRALNCEKLYLKLFQKGVITRISCAFVCFEVFSLNGEDLEKIALVLKEILNKA</sequence>
<keyword id="KW-0963">Cytoplasm</keyword>
<keyword id="KW-0648">Protein biosynthesis</keyword>
<keyword id="KW-0663">Pyridoxal phosphate</keyword>
<keyword id="KW-0711">Selenium</keyword>
<keyword id="KW-0808">Transferase</keyword>
<proteinExistence type="inferred from homology"/>
<gene>
    <name evidence="1" type="primary">selA</name>
    <name type="ordered locus">jhp_1406</name>
</gene>
<reference key="1">
    <citation type="journal article" date="1999" name="Nature">
        <title>Genomic sequence comparison of two unrelated isolates of the human gastric pathogen Helicobacter pylori.</title>
        <authorList>
            <person name="Alm R.A."/>
            <person name="Ling L.-S.L."/>
            <person name="Moir D.T."/>
            <person name="King B.L."/>
            <person name="Brown E.D."/>
            <person name="Doig P.C."/>
            <person name="Smith D.R."/>
            <person name="Noonan B."/>
            <person name="Guild B.C."/>
            <person name="deJonge B.L."/>
            <person name="Carmel G."/>
            <person name="Tummino P.J."/>
            <person name="Caruso A."/>
            <person name="Uria-Nickelsen M."/>
            <person name="Mills D.M."/>
            <person name="Ives C."/>
            <person name="Gibson R."/>
            <person name="Merberg D."/>
            <person name="Mills S.D."/>
            <person name="Jiang Q."/>
            <person name="Taylor D.E."/>
            <person name="Vovis G.F."/>
            <person name="Trust T.J."/>
        </authorList>
    </citation>
    <scope>NUCLEOTIDE SEQUENCE [LARGE SCALE GENOMIC DNA]</scope>
    <source>
        <strain>J99 / ATCC 700824</strain>
    </source>
</reference>
<organism>
    <name type="scientific">Helicobacter pylori (strain J99 / ATCC 700824)</name>
    <name type="common">Campylobacter pylori J99</name>
    <dbReference type="NCBI Taxonomy" id="85963"/>
    <lineage>
        <taxon>Bacteria</taxon>
        <taxon>Pseudomonadati</taxon>
        <taxon>Campylobacterota</taxon>
        <taxon>Epsilonproteobacteria</taxon>
        <taxon>Campylobacterales</taxon>
        <taxon>Helicobacteraceae</taxon>
        <taxon>Helicobacter</taxon>
    </lineage>
</organism>
<comment type="function">
    <text evidence="1">Converts seryl-tRNA(Sec) to selenocysteinyl-tRNA(Sec) required for selenoprotein biosynthesis.</text>
</comment>
<comment type="catalytic activity">
    <reaction evidence="1">
        <text>L-seryl-tRNA(Sec) + selenophosphate + H(+) = L-selenocysteinyl-tRNA(Sec) + phosphate</text>
        <dbReference type="Rhea" id="RHEA:22728"/>
        <dbReference type="Rhea" id="RHEA-COMP:9742"/>
        <dbReference type="Rhea" id="RHEA-COMP:9743"/>
        <dbReference type="ChEBI" id="CHEBI:15378"/>
        <dbReference type="ChEBI" id="CHEBI:16144"/>
        <dbReference type="ChEBI" id="CHEBI:43474"/>
        <dbReference type="ChEBI" id="CHEBI:78533"/>
        <dbReference type="ChEBI" id="CHEBI:78573"/>
        <dbReference type="EC" id="2.9.1.1"/>
    </reaction>
</comment>
<comment type="cofactor">
    <cofactor evidence="1">
        <name>pyridoxal 5'-phosphate</name>
        <dbReference type="ChEBI" id="CHEBI:597326"/>
    </cofactor>
</comment>
<comment type="pathway">
    <text evidence="1">Aminoacyl-tRNA biosynthesis; selenocysteinyl-tRNA(Sec) biosynthesis; selenocysteinyl-tRNA(Sec) from L-seryl-tRNA(Sec) (bacterial route): step 1/1.</text>
</comment>
<comment type="subcellular location">
    <subcellularLocation>
        <location evidence="1">Cytoplasm</location>
    </subcellularLocation>
</comment>
<comment type="similarity">
    <text evidence="1">Belongs to the SelA family.</text>
</comment>
<feature type="chain" id="PRO_0000189608" description="L-seryl-tRNA(Sec) selenium transferase">
    <location>
        <begin position="1"/>
        <end position="390"/>
    </location>
</feature>
<feature type="modified residue" description="N6-(pyridoxal phosphate)lysine" evidence="1">
    <location>
        <position position="225"/>
    </location>
</feature>
<protein>
    <recommendedName>
        <fullName evidence="1">L-seryl-tRNA(Sec) selenium transferase</fullName>
        <ecNumber evidence="1">2.9.1.1</ecNumber>
    </recommendedName>
    <alternativeName>
        <fullName evidence="1">Selenocysteine synthase</fullName>
        <shortName evidence="1">Sec synthase</shortName>
    </alternativeName>
    <alternativeName>
        <fullName evidence="1">Selenocysteinyl-tRNA(Sec) synthase</fullName>
    </alternativeName>
</protein>
<dbReference type="EC" id="2.9.1.1" evidence="1"/>
<dbReference type="EMBL" id="AE001439">
    <property type="protein sequence ID" value="AAD06979.1"/>
    <property type="molecule type" value="Genomic_DNA"/>
</dbReference>
<dbReference type="PIR" id="F71811">
    <property type="entry name" value="F71811"/>
</dbReference>
<dbReference type="RefSeq" id="WP_001284248.1">
    <property type="nucleotide sequence ID" value="NC_000921.1"/>
</dbReference>
<dbReference type="SMR" id="Q9ZJA7"/>
<dbReference type="KEGG" id="hpj:jhp_1406"/>
<dbReference type="PATRIC" id="fig|85963.30.peg.1143"/>
<dbReference type="eggNOG" id="COG1921">
    <property type="taxonomic scope" value="Bacteria"/>
</dbReference>
<dbReference type="UniPathway" id="UPA00906">
    <property type="reaction ID" value="UER00896"/>
</dbReference>
<dbReference type="Proteomes" id="UP000000804">
    <property type="component" value="Chromosome"/>
</dbReference>
<dbReference type="GO" id="GO:0005737">
    <property type="term" value="C:cytoplasm"/>
    <property type="evidence" value="ECO:0007669"/>
    <property type="project" value="UniProtKB-SubCell"/>
</dbReference>
<dbReference type="GO" id="GO:0004125">
    <property type="term" value="F:L-seryl-tRNA(Sec) selenium transferase activity"/>
    <property type="evidence" value="ECO:0007669"/>
    <property type="project" value="UniProtKB-UniRule"/>
</dbReference>
<dbReference type="GO" id="GO:0001717">
    <property type="term" value="P:conversion of seryl-tRNAsec to selenocys-tRNAsec"/>
    <property type="evidence" value="ECO:0007669"/>
    <property type="project" value="UniProtKB-UniRule"/>
</dbReference>
<dbReference type="GO" id="GO:0001514">
    <property type="term" value="P:selenocysteine incorporation"/>
    <property type="evidence" value="ECO:0007669"/>
    <property type="project" value="UniProtKB-UniRule"/>
</dbReference>
<dbReference type="Gene3D" id="3.90.1150.180">
    <property type="match status" value="1"/>
</dbReference>
<dbReference type="Gene3D" id="3.40.640.10">
    <property type="entry name" value="Type I PLP-dependent aspartate aminotransferase-like (Major domain)"/>
    <property type="match status" value="1"/>
</dbReference>
<dbReference type="HAMAP" id="MF_00423">
    <property type="entry name" value="SelA"/>
    <property type="match status" value="1"/>
</dbReference>
<dbReference type="InterPro" id="IPR015424">
    <property type="entry name" value="PyrdxlP-dep_Trfase"/>
</dbReference>
<dbReference type="InterPro" id="IPR015421">
    <property type="entry name" value="PyrdxlP-dep_Trfase_major"/>
</dbReference>
<dbReference type="InterPro" id="IPR018319">
    <property type="entry name" value="SelA-like"/>
</dbReference>
<dbReference type="InterPro" id="IPR004534">
    <property type="entry name" value="SelA_trans"/>
</dbReference>
<dbReference type="PANTHER" id="PTHR32328">
    <property type="entry name" value="L-SERYL-TRNA(SEC) SELENIUM TRANSFERASE"/>
    <property type="match status" value="1"/>
</dbReference>
<dbReference type="PANTHER" id="PTHR32328:SF0">
    <property type="entry name" value="L-SERYL-TRNA(SEC) SELENIUM TRANSFERASE"/>
    <property type="match status" value="1"/>
</dbReference>
<dbReference type="Pfam" id="PF03841">
    <property type="entry name" value="SelA"/>
    <property type="match status" value="1"/>
</dbReference>
<dbReference type="SUPFAM" id="SSF53383">
    <property type="entry name" value="PLP-dependent transferases"/>
    <property type="match status" value="1"/>
</dbReference>
<evidence type="ECO:0000255" key="1">
    <source>
        <dbReference type="HAMAP-Rule" id="MF_00423"/>
    </source>
</evidence>
<accession>Q9ZJA7</accession>